<keyword id="KW-0093">Biotin biosynthesis</keyword>
<keyword id="KW-0663">Pyridoxal phosphate</keyword>
<keyword id="KW-0808">Transferase</keyword>
<organism>
    <name type="scientific">Xanthomonas campestris pv. campestris (strain 8004)</name>
    <dbReference type="NCBI Taxonomy" id="314565"/>
    <lineage>
        <taxon>Bacteria</taxon>
        <taxon>Pseudomonadati</taxon>
        <taxon>Pseudomonadota</taxon>
        <taxon>Gammaproteobacteria</taxon>
        <taxon>Lysobacterales</taxon>
        <taxon>Lysobacteraceae</taxon>
        <taxon>Xanthomonas</taxon>
    </lineage>
</organism>
<gene>
    <name evidence="1" type="primary">bioF</name>
    <name type="ordered locus">XC_0399</name>
</gene>
<comment type="function">
    <text evidence="1">Catalyzes the decarboxylative condensation of pimeloyl-[acyl-carrier protein] and L-alanine to produce 8-amino-7-oxononanoate (AON), [acyl-carrier protein], and carbon dioxide.</text>
</comment>
<comment type="catalytic activity">
    <reaction evidence="1">
        <text>6-carboxyhexanoyl-[ACP] + L-alanine + H(+) = (8S)-8-amino-7-oxononanoate + holo-[ACP] + CO2</text>
        <dbReference type="Rhea" id="RHEA:42288"/>
        <dbReference type="Rhea" id="RHEA-COMP:9685"/>
        <dbReference type="Rhea" id="RHEA-COMP:9955"/>
        <dbReference type="ChEBI" id="CHEBI:15378"/>
        <dbReference type="ChEBI" id="CHEBI:16526"/>
        <dbReference type="ChEBI" id="CHEBI:57972"/>
        <dbReference type="ChEBI" id="CHEBI:64479"/>
        <dbReference type="ChEBI" id="CHEBI:78846"/>
        <dbReference type="ChEBI" id="CHEBI:149468"/>
        <dbReference type="EC" id="2.3.1.47"/>
    </reaction>
</comment>
<comment type="cofactor">
    <cofactor evidence="1">
        <name>pyridoxal 5'-phosphate</name>
        <dbReference type="ChEBI" id="CHEBI:597326"/>
    </cofactor>
</comment>
<comment type="pathway">
    <text evidence="1">Cofactor biosynthesis; biotin biosynthesis.</text>
</comment>
<comment type="subunit">
    <text evidence="1">Homodimer.</text>
</comment>
<comment type="similarity">
    <text evidence="1">Belongs to the class-II pyridoxal-phosphate-dependent aminotransferase family. BioF subfamily.</text>
</comment>
<name>BIOF_XANC8</name>
<evidence type="ECO:0000255" key="1">
    <source>
        <dbReference type="HAMAP-Rule" id="MF_01693"/>
    </source>
</evidence>
<proteinExistence type="inferred from homology"/>
<protein>
    <recommendedName>
        <fullName evidence="1">8-amino-7-oxononanoate synthase</fullName>
        <shortName evidence="1">AONS</shortName>
        <ecNumber evidence="1">2.3.1.47</ecNumber>
    </recommendedName>
    <alternativeName>
        <fullName evidence="1">7-keto-8-amino-pelargonic acid synthase</fullName>
        <shortName evidence="1">7-KAP synthase</shortName>
        <shortName evidence="1">KAPA synthase</shortName>
    </alternativeName>
    <alternativeName>
        <fullName evidence="1">8-amino-7-ketopelargonate synthase</fullName>
    </alternativeName>
</protein>
<feature type="chain" id="PRO_0000381142" description="8-amino-7-oxononanoate synthase">
    <location>
        <begin position="1"/>
        <end position="401"/>
    </location>
</feature>
<feature type="binding site" evidence="1">
    <location>
        <position position="24"/>
    </location>
    <ligand>
        <name>substrate</name>
    </ligand>
</feature>
<feature type="binding site" evidence="1">
    <location>
        <begin position="111"/>
        <end position="112"/>
    </location>
    <ligand>
        <name>pyridoxal 5'-phosphate</name>
        <dbReference type="ChEBI" id="CHEBI:597326"/>
    </ligand>
</feature>
<feature type="binding site" evidence="1">
    <location>
        <position position="137"/>
    </location>
    <ligand>
        <name>substrate</name>
    </ligand>
</feature>
<feature type="binding site" evidence="1">
    <location>
        <position position="183"/>
    </location>
    <ligand>
        <name>pyridoxal 5'-phosphate</name>
        <dbReference type="ChEBI" id="CHEBI:597326"/>
    </ligand>
</feature>
<feature type="binding site" evidence="1">
    <location>
        <position position="211"/>
    </location>
    <ligand>
        <name>pyridoxal 5'-phosphate</name>
        <dbReference type="ChEBI" id="CHEBI:597326"/>
    </ligand>
</feature>
<feature type="binding site" evidence="1">
    <location>
        <position position="240"/>
    </location>
    <ligand>
        <name>pyridoxal 5'-phosphate</name>
        <dbReference type="ChEBI" id="CHEBI:597326"/>
    </ligand>
</feature>
<feature type="binding site" evidence="1">
    <location>
        <position position="357"/>
    </location>
    <ligand>
        <name>substrate</name>
    </ligand>
</feature>
<feature type="modified residue" description="N6-(pyridoxal phosphate)lysine" evidence="1">
    <location>
        <position position="243"/>
    </location>
</feature>
<sequence>MARPDLHERISSLRKLRVAQERVRVRRQVGRRDGVRLEIDGRWLTGFCSNDYLGLSQQFEVVAALQDAAARDGAGATASHLICGHHTAHETLERDIAEWLGYPSALLFGSGFIANLAVQQALLSEEDDVCVQDRLNHASLLDATRLAGCRLRRYPHLDVEGAMRQLKGAPEGAAMLASDGVFSMDGDVAPLRALSLVARMQEALFYVDDAHGVGVLGPQGRGCVADAGLGVAEVPLQLVTLGKALGGYGAVVVGEEALIRHLAETARPYIYTTALPPAQVAATLAAVRLARRDDWRRTRLTELIGTFRDGARRHGFELMASDTPIQPLLCGEEPTVMAMSAALEQAGFMVGAIRPPTVPEGKARLRVTLSALHTPQQVQALVDAIVQARDVVSRQPQRALA</sequence>
<reference key="1">
    <citation type="journal article" date="2005" name="Genome Res.">
        <title>Comparative and functional genomic analyses of the pathogenicity of phytopathogen Xanthomonas campestris pv. campestris.</title>
        <authorList>
            <person name="Qian W."/>
            <person name="Jia Y."/>
            <person name="Ren S.-X."/>
            <person name="He Y.-Q."/>
            <person name="Feng J.-X."/>
            <person name="Lu L.-F."/>
            <person name="Sun Q."/>
            <person name="Ying G."/>
            <person name="Tang D.-J."/>
            <person name="Tang H."/>
            <person name="Wu W."/>
            <person name="Hao P."/>
            <person name="Wang L."/>
            <person name="Jiang B.-L."/>
            <person name="Zeng S."/>
            <person name="Gu W.-Y."/>
            <person name="Lu G."/>
            <person name="Rong L."/>
            <person name="Tian Y."/>
            <person name="Yao Z."/>
            <person name="Fu G."/>
            <person name="Chen B."/>
            <person name="Fang R."/>
            <person name="Qiang B."/>
            <person name="Chen Z."/>
            <person name="Zhao G.-P."/>
            <person name="Tang J.-L."/>
            <person name="He C."/>
        </authorList>
    </citation>
    <scope>NUCLEOTIDE SEQUENCE [LARGE SCALE GENOMIC DNA]</scope>
    <source>
        <strain>8004</strain>
    </source>
</reference>
<accession>Q4UZN9</accession>
<dbReference type="EC" id="2.3.1.47" evidence="1"/>
<dbReference type="EMBL" id="CP000050">
    <property type="protein sequence ID" value="AAY47484.1"/>
    <property type="molecule type" value="Genomic_DNA"/>
</dbReference>
<dbReference type="RefSeq" id="WP_011035641.1">
    <property type="nucleotide sequence ID" value="NZ_CP155948.1"/>
</dbReference>
<dbReference type="SMR" id="Q4UZN9"/>
<dbReference type="KEGG" id="xcb:XC_0399"/>
<dbReference type="HOGENOM" id="CLU_015846_11_2_6"/>
<dbReference type="UniPathway" id="UPA00078"/>
<dbReference type="Proteomes" id="UP000000420">
    <property type="component" value="Chromosome"/>
</dbReference>
<dbReference type="GO" id="GO:0008710">
    <property type="term" value="F:8-amino-7-oxononanoate synthase activity"/>
    <property type="evidence" value="ECO:0007669"/>
    <property type="project" value="UniProtKB-UniRule"/>
</dbReference>
<dbReference type="GO" id="GO:0030170">
    <property type="term" value="F:pyridoxal phosphate binding"/>
    <property type="evidence" value="ECO:0007669"/>
    <property type="project" value="UniProtKB-UniRule"/>
</dbReference>
<dbReference type="GO" id="GO:0009102">
    <property type="term" value="P:biotin biosynthetic process"/>
    <property type="evidence" value="ECO:0007669"/>
    <property type="project" value="UniProtKB-UniRule"/>
</dbReference>
<dbReference type="Gene3D" id="3.90.1150.10">
    <property type="entry name" value="Aspartate Aminotransferase, domain 1"/>
    <property type="match status" value="1"/>
</dbReference>
<dbReference type="Gene3D" id="3.40.640.10">
    <property type="entry name" value="Type I PLP-dependent aspartate aminotransferase-like (Major domain)"/>
    <property type="match status" value="1"/>
</dbReference>
<dbReference type="HAMAP" id="MF_01693">
    <property type="entry name" value="BioF_aminotrans_2"/>
    <property type="match status" value="1"/>
</dbReference>
<dbReference type="InterPro" id="IPR004839">
    <property type="entry name" value="Aminotransferase_I/II_large"/>
</dbReference>
<dbReference type="InterPro" id="IPR050087">
    <property type="entry name" value="AON_synthase_class-II"/>
</dbReference>
<dbReference type="InterPro" id="IPR004723">
    <property type="entry name" value="AONS_Archaea/Proteobacteria"/>
</dbReference>
<dbReference type="InterPro" id="IPR022834">
    <property type="entry name" value="AONS_Proteobacteria"/>
</dbReference>
<dbReference type="InterPro" id="IPR015424">
    <property type="entry name" value="PyrdxlP-dep_Trfase"/>
</dbReference>
<dbReference type="InterPro" id="IPR015421">
    <property type="entry name" value="PyrdxlP-dep_Trfase_major"/>
</dbReference>
<dbReference type="InterPro" id="IPR015422">
    <property type="entry name" value="PyrdxlP-dep_Trfase_small"/>
</dbReference>
<dbReference type="NCBIfam" id="TIGR00858">
    <property type="entry name" value="bioF"/>
    <property type="match status" value="1"/>
</dbReference>
<dbReference type="PANTHER" id="PTHR13693:SF100">
    <property type="entry name" value="8-AMINO-7-OXONONANOATE SYNTHASE"/>
    <property type="match status" value="1"/>
</dbReference>
<dbReference type="PANTHER" id="PTHR13693">
    <property type="entry name" value="CLASS II AMINOTRANSFERASE/8-AMINO-7-OXONONANOATE SYNTHASE"/>
    <property type="match status" value="1"/>
</dbReference>
<dbReference type="Pfam" id="PF00155">
    <property type="entry name" value="Aminotran_1_2"/>
    <property type="match status" value="1"/>
</dbReference>
<dbReference type="SUPFAM" id="SSF53383">
    <property type="entry name" value="PLP-dependent transferases"/>
    <property type="match status" value="1"/>
</dbReference>
<dbReference type="PROSITE" id="PS00599">
    <property type="entry name" value="AA_TRANSFER_CLASS_2"/>
    <property type="match status" value="1"/>
</dbReference>